<sequence>MSYYDIIFSKHIDKIKSEGRYREFKALKRQADNFPFAEHANKQIVMWCINDYLGMSKHAKVMHASIDALLKYGVGSGGTRNIGGNNIAILELEKELANLHKKQAALVFTSGFVANDTTLASLAKIMPDIVFFSDELNHASIIAGITSSRAEKYIYRHLDVKHLEELLQSVDINRPKIVVFESAYSMDGFFSPIKDIINLAKKYNALTFIDEVHTVGLYGKQGGGIAELLNCSDQIDIIQGTLAKAYGTIGGYITSNHNLVDAIRLTAPGFIFTTSLPPVISTAATHSIRHLKESNEERIKHQEVVTKLKNSFERFNIPYLKNESHIVPIIIGDPIKTAKASNMLLNEYGIYVQHINFPTVPRGTERLRIIPTPAHTDKMINDLSVALVQIFAELDIELSSAKELNEEVRLNLIA</sequence>
<name>HEM1_RICCN</name>
<keyword id="KW-0012">Acyltransferase</keyword>
<keyword id="KW-0350">Heme biosynthesis</keyword>
<keyword id="KW-0663">Pyridoxal phosphate</keyword>
<keyword id="KW-0808">Transferase</keyword>
<evidence type="ECO:0000250" key="1">
    <source>
        <dbReference type="UniProtKB" id="P18079"/>
    </source>
</evidence>
<evidence type="ECO:0000305" key="2"/>
<gene>
    <name type="primary">hemA</name>
    <name type="ordered locus">RC1303</name>
</gene>
<comment type="catalytic activity">
    <reaction>
        <text>succinyl-CoA + glycine + H(+) = 5-aminolevulinate + CO2 + CoA</text>
        <dbReference type="Rhea" id="RHEA:12921"/>
        <dbReference type="ChEBI" id="CHEBI:15378"/>
        <dbReference type="ChEBI" id="CHEBI:16526"/>
        <dbReference type="ChEBI" id="CHEBI:57287"/>
        <dbReference type="ChEBI" id="CHEBI:57292"/>
        <dbReference type="ChEBI" id="CHEBI:57305"/>
        <dbReference type="ChEBI" id="CHEBI:356416"/>
        <dbReference type="EC" id="2.3.1.37"/>
    </reaction>
</comment>
<comment type="cofactor">
    <cofactor evidence="1">
        <name>pyridoxal 5'-phosphate</name>
        <dbReference type="ChEBI" id="CHEBI:597326"/>
    </cofactor>
</comment>
<comment type="pathway">
    <text>Porphyrin-containing compound metabolism; protoporphyrin-IX biosynthesis; 5-aminolevulinate from glycine: step 1/1.</text>
</comment>
<comment type="subunit">
    <text evidence="1">Homodimer.</text>
</comment>
<comment type="similarity">
    <text evidence="2">Belongs to the class-II pyridoxal-phosphate-dependent aminotransferase family.</text>
</comment>
<comment type="sequence caution" evidence="2">
    <conflict type="erroneous initiation">
        <sequence resource="EMBL-CDS" id="AAL03841"/>
    </conflict>
</comment>
<proteinExistence type="inferred from homology"/>
<accession>Q92G23</accession>
<organism>
    <name type="scientific">Rickettsia conorii (strain ATCC VR-613 / Malish 7)</name>
    <dbReference type="NCBI Taxonomy" id="272944"/>
    <lineage>
        <taxon>Bacteria</taxon>
        <taxon>Pseudomonadati</taxon>
        <taxon>Pseudomonadota</taxon>
        <taxon>Alphaproteobacteria</taxon>
        <taxon>Rickettsiales</taxon>
        <taxon>Rickettsiaceae</taxon>
        <taxon>Rickettsieae</taxon>
        <taxon>Rickettsia</taxon>
        <taxon>spotted fever group</taxon>
    </lineage>
</organism>
<feature type="chain" id="PRO_0000280897" description="5-aminolevulinate synthase">
    <location>
        <begin position="1"/>
        <end position="414"/>
    </location>
</feature>
<feature type="active site" evidence="1">
    <location>
        <position position="244"/>
    </location>
</feature>
<feature type="binding site" evidence="1">
    <location>
        <position position="22"/>
    </location>
    <ligand>
        <name>substrate</name>
    </ligand>
</feature>
<feature type="binding site" evidence="1">
    <location>
        <position position="133"/>
    </location>
    <ligand>
        <name>substrate</name>
    </ligand>
</feature>
<feature type="binding site" evidence="1">
    <location>
        <position position="152"/>
    </location>
    <ligand>
        <name>substrate</name>
    </ligand>
</feature>
<feature type="binding site" description="in other chain" evidence="1">
    <location>
        <position position="185"/>
    </location>
    <ligand>
        <name>pyridoxal 5'-phosphate</name>
        <dbReference type="ChEBI" id="CHEBI:597326"/>
        <note>ligand shared between dimeric partners</note>
    </ligand>
</feature>
<feature type="binding site" description="in other chain" evidence="1">
    <location>
        <position position="213"/>
    </location>
    <ligand>
        <name>pyridoxal 5'-phosphate</name>
        <dbReference type="ChEBI" id="CHEBI:597326"/>
        <note>ligand shared between dimeric partners</note>
    </ligand>
</feature>
<feature type="binding site" description="in other chain" evidence="1">
    <location>
        <position position="241"/>
    </location>
    <ligand>
        <name>pyridoxal 5'-phosphate</name>
        <dbReference type="ChEBI" id="CHEBI:597326"/>
        <note>ligand shared between dimeric partners</note>
    </ligand>
</feature>
<feature type="binding site" evidence="1">
    <location>
        <position position="273"/>
    </location>
    <ligand>
        <name>pyridoxal 5'-phosphate</name>
        <dbReference type="ChEBI" id="CHEBI:597326"/>
        <note>ligand shared between dimeric partners</note>
    </ligand>
</feature>
<feature type="binding site" evidence="1">
    <location>
        <position position="274"/>
    </location>
    <ligand>
        <name>pyridoxal 5'-phosphate</name>
        <dbReference type="ChEBI" id="CHEBI:597326"/>
        <note>ligand shared between dimeric partners</note>
    </ligand>
</feature>
<feature type="binding site" evidence="1">
    <location>
        <position position="359"/>
    </location>
    <ligand>
        <name>substrate</name>
    </ligand>
</feature>
<feature type="modified residue" description="N6-(pyridoxal phosphate)lysine" evidence="1">
    <location>
        <position position="244"/>
    </location>
</feature>
<reference key="1">
    <citation type="journal article" date="2001" name="Science">
        <title>Mechanisms of evolution in Rickettsia conorii and R. prowazekii.</title>
        <authorList>
            <person name="Ogata H."/>
            <person name="Audic S."/>
            <person name="Renesto-Audiffren P."/>
            <person name="Fournier P.-E."/>
            <person name="Barbe V."/>
            <person name="Samson D."/>
            <person name="Roux V."/>
            <person name="Cossart P."/>
            <person name="Weissenbach J."/>
            <person name="Claverie J.-M."/>
            <person name="Raoult D."/>
        </authorList>
    </citation>
    <scope>NUCLEOTIDE SEQUENCE [LARGE SCALE GENOMIC DNA]</scope>
    <source>
        <strain>ATCC VR-613 / Malish 7</strain>
    </source>
</reference>
<protein>
    <recommendedName>
        <fullName>5-aminolevulinate synthase</fullName>
        <ecNumber>2.3.1.37</ecNumber>
    </recommendedName>
    <alternativeName>
        <fullName>5-aminolevulinic acid synthase</fullName>
    </alternativeName>
    <alternativeName>
        <fullName>Delta-ALA synthase</fullName>
    </alternativeName>
    <alternativeName>
        <fullName>Delta-aminolevulinate synthase</fullName>
    </alternativeName>
</protein>
<dbReference type="EC" id="2.3.1.37"/>
<dbReference type="EMBL" id="AE006914">
    <property type="protein sequence ID" value="AAL03841.1"/>
    <property type="status" value="ALT_INIT"/>
    <property type="molecule type" value="Genomic_DNA"/>
</dbReference>
<dbReference type="PIR" id="G97862">
    <property type="entry name" value="G97862"/>
</dbReference>
<dbReference type="RefSeq" id="WP_016830561.1">
    <property type="nucleotide sequence ID" value="NC_003103.1"/>
</dbReference>
<dbReference type="SMR" id="Q92G23"/>
<dbReference type="GeneID" id="928451"/>
<dbReference type="KEGG" id="rco:RC1303"/>
<dbReference type="PATRIC" id="fig|272944.4.peg.1495"/>
<dbReference type="HOGENOM" id="CLU_015846_11_1_5"/>
<dbReference type="UniPathway" id="UPA00251">
    <property type="reaction ID" value="UER00375"/>
</dbReference>
<dbReference type="Proteomes" id="UP000000816">
    <property type="component" value="Chromosome"/>
</dbReference>
<dbReference type="GO" id="GO:0003870">
    <property type="term" value="F:5-aminolevulinate synthase activity"/>
    <property type="evidence" value="ECO:0007669"/>
    <property type="project" value="UniProtKB-EC"/>
</dbReference>
<dbReference type="GO" id="GO:0030170">
    <property type="term" value="F:pyridoxal phosphate binding"/>
    <property type="evidence" value="ECO:0007669"/>
    <property type="project" value="InterPro"/>
</dbReference>
<dbReference type="GO" id="GO:0006782">
    <property type="term" value="P:protoporphyrinogen IX biosynthetic process"/>
    <property type="evidence" value="ECO:0007669"/>
    <property type="project" value="UniProtKB-UniPathway"/>
</dbReference>
<dbReference type="CDD" id="cd06454">
    <property type="entry name" value="KBL_like"/>
    <property type="match status" value="1"/>
</dbReference>
<dbReference type="FunFam" id="3.40.640.10:FF:000006">
    <property type="entry name" value="5-aminolevulinate synthase, mitochondrial"/>
    <property type="match status" value="1"/>
</dbReference>
<dbReference type="Gene3D" id="3.90.1150.10">
    <property type="entry name" value="Aspartate Aminotransferase, domain 1"/>
    <property type="match status" value="1"/>
</dbReference>
<dbReference type="Gene3D" id="3.40.640.10">
    <property type="entry name" value="Type I PLP-dependent aspartate aminotransferase-like (Major domain)"/>
    <property type="match status" value="1"/>
</dbReference>
<dbReference type="InterPro" id="IPR010961">
    <property type="entry name" value="4pyrrol_synth_NH2levulA_synth"/>
</dbReference>
<dbReference type="InterPro" id="IPR001917">
    <property type="entry name" value="Aminotrans_II_pyridoxalP_BS"/>
</dbReference>
<dbReference type="InterPro" id="IPR004839">
    <property type="entry name" value="Aminotransferase_I/II_large"/>
</dbReference>
<dbReference type="InterPro" id="IPR050087">
    <property type="entry name" value="AON_synthase_class-II"/>
</dbReference>
<dbReference type="InterPro" id="IPR015424">
    <property type="entry name" value="PyrdxlP-dep_Trfase"/>
</dbReference>
<dbReference type="InterPro" id="IPR015421">
    <property type="entry name" value="PyrdxlP-dep_Trfase_major"/>
</dbReference>
<dbReference type="InterPro" id="IPR015422">
    <property type="entry name" value="PyrdxlP-dep_Trfase_small"/>
</dbReference>
<dbReference type="NCBIfam" id="TIGR01821">
    <property type="entry name" value="5aminolev_synth"/>
    <property type="match status" value="1"/>
</dbReference>
<dbReference type="PANTHER" id="PTHR13693:SF102">
    <property type="entry name" value="2-AMINO-3-KETOBUTYRATE COENZYME A LIGASE, MITOCHONDRIAL"/>
    <property type="match status" value="1"/>
</dbReference>
<dbReference type="PANTHER" id="PTHR13693">
    <property type="entry name" value="CLASS II AMINOTRANSFERASE/8-AMINO-7-OXONONANOATE SYNTHASE"/>
    <property type="match status" value="1"/>
</dbReference>
<dbReference type="Pfam" id="PF00155">
    <property type="entry name" value="Aminotran_1_2"/>
    <property type="match status" value="1"/>
</dbReference>
<dbReference type="SUPFAM" id="SSF53383">
    <property type="entry name" value="PLP-dependent transferases"/>
    <property type="match status" value="1"/>
</dbReference>
<dbReference type="PROSITE" id="PS00599">
    <property type="entry name" value="AA_TRANSFER_CLASS_2"/>
    <property type="match status" value="1"/>
</dbReference>